<accession>Q9SIB4</accession>
<name>WOX3_ARATH</name>
<reference key="1">
    <citation type="journal article" date="2001" name="Genes Dev.">
        <title>A homeobox gene, PRESSED FLOWER, regulates lateral axis-dependent development of Arabidopsis flowers.</title>
        <authorList>
            <person name="Matsumoto N."/>
            <person name="Okada K."/>
        </authorList>
    </citation>
    <scope>NUCLEOTIDE SEQUENCE [MRNA]</scope>
    <scope>FUNCTION</scope>
    <scope>TISSUE SPECIFICITY</scope>
    <scope>DEVELOPMENTAL STAGE</scope>
    <source>
        <strain>cv. Landsberg erecta</strain>
    </source>
</reference>
<reference key="2">
    <citation type="journal article" date="2002" name="Genes Dev.">
        <authorList>
            <person name="Matsumoto N."/>
            <person name="Okada K."/>
        </authorList>
    </citation>
    <scope>ERRATUM OF PUBMED:11751640</scope>
</reference>
<reference key="3">
    <citation type="journal article" date="2004" name="Development">
        <title>Expression dynamics of WOX genes mark cell fate decisions during early embryonic patterning in Arabidopsis thaliana.</title>
        <authorList>
            <person name="Haecker A."/>
            <person name="Gross-Hardt R."/>
            <person name="Geiges B."/>
            <person name="Sarkar A."/>
            <person name="Breuninger H."/>
            <person name="Herrmann M."/>
            <person name="Laux T."/>
        </authorList>
    </citation>
    <scope>NUCLEOTIDE SEQUENCE [MRNA]</scope>
    <scope>DEVELOPMENTAL STAGE</scope>
    <source>
        <strain>cv. Landsberg erecta</strain>
    </source>
</reference>
<reference key="4">
    <citation type="journal article" date="1999" name="Nature">
        <title>Sequence and analysis of chromosome 2 of the plant Arabidopsis thaliana.</title>
        <authorList>
            <person name="Lin X."/>
            <person name="Kaul S."/>
            <person name="Rounsley S.D."/>
            <person name="Shea T.P."/>
            <person name="Benito M.-I."/>
            <person name="Town C.D."/>
            <person name="Fujii C.Y."/>
            <person name="Mason T.M."/>
            <person name="Bowman C.L."/>
            <person name="Barnstead M.E."/>
            <person name="Feldblyum T.V."/>
            <person name="Buell C.R."/>
            <person name="Ketchum K.A."/>
            <person name="Lee J.J."/>
            <person name="Ronning C.M."/>
            <person name="Koo H.L."/>
            <person name="Moffat K.S."/>
            <person name="Cronin L.A."/>
            <person name="Shen M."/>
            <person name="Pai G."/>
            <person name="Van Aken S."/>
            <person name="Umayam L."/>
            <person name="Tallon L.J."/>
            <person name="Gill J.E."/>
            <person name="Adams M.D."/>
            <person name="Carrera A.J."/>
            <person name="Creasy T.H."/>
            <person name="Goodman H.M."/>
            <person name="Somerville C.R."/>
            <person name="Copenhaver G.P."/>
            <person name="Preuss D."/>
            <person name="Nierman W.C."/>
            <person name="White O."/>
            <person name="Eisen J.A."/>
            <person name="Salzberg S.L."/>
            <person name="Fraser C.M."/>
            <person name="Venter J.C."/>
        </authorList>
    </citation>
    <scope>NUCLEOTIDE SEQUENCE [LARGE SCALE GENOMIC DNA]</scope>
    <source>
        <strain>cv. Columbia</strain>
    </source>
</reference>
<reference key="5">
    <citation type="journal article" date="2017" name="Plant J.">
        <title>Araport11: a complete reannotation of the Arabidopsis thaliana reference genome.</title>
        <authorList>
            <person name="Cheng C.Y."/>
            <person name="Krishnakumar V."/>
            <person name="Chan A.P."/>
            <person name="Thibaud-Nissen F."/>
            <person name="Schobel S."/>
            <person name="Town C.D."/>
        </authorList>
    </citation>
    <scope>GENOME REANNOTATION</scope>
    <source>
        <strain>cv. Columbia</strain>
    </source>
</reference>
<reference key="6">
    <citation type="journal article" date="2004" name="Development">
        <title>The maize duplicate genes narrow sheath1 and narrow sheath2 encode a conserved homeobox gene function in a lateral domain of shoot apical meristems.</title>
        <authorList>
            <person name="Nardmann J."/>
            <person name="Ji J."/>
            <person name="Werr W."/>
            <person name="Scanlon M.J."/>
        </authorList>
    </citation>
    <scope>FUNCTION</scope>
</reference>
<evidence type="ECO:0000255" key="1">
    <source>
        <dbReference type="PROSITE-ProRule" id="PRU00108"/>
    </source>
</evidence>
<evidence type="ECO:0000269" key="2">
    <source>
    </source>
</evidence>
<evidence type="ECO:0000269" key="3">
    <source>
    </source>
</evidence>
<evidence type="ECO:0000269" key="4">
    <source>
    </source>
</evidence>
<evidence type="ECO:0000305" key="5"/>
<gene>
    <name type="primary">WOX3</name>
    <name type="synonym">PRS</name>
    <name type="ordered locus">At2g28610</name>
    <name type="ORF">T8O18.10</name>
</gene>
<keyword id="KW-0217">Developmental protein</keyword>
<keyword id="KW-0221">Differentiation</keyword>
<keyword id="KW-0238">DNA-binding</keyword>
<keyword id="KW-0287">Flowering</keyword>
<keyword id="KW-0371">Homeobox</keyword>
<keyword id="KW-0539">Nucleus</keyword>
<keyword id="KW-1185">Reference proteome</keyword>
<keyword id="KW-0804">Transcription</keyword>
<keyword id="KW-0805">Transcription regulation</keyword>
<proteinExistence type="evidence at protein level"/>
<sequence length="244" mass="28134">MSPVASTRWCPTPEQLMILEEMYRSGIRTPNAVQIQQITAHLAFYGRIEGKNVFYWFQNHKARDRQKLRKKLAKQLHQQQHQLQLQLQQIKPKPISSMISQPVNKNIIDHHNPYHHHHHNHHHNHHRPYDHMSFDCCSHPSPMCLPHQGTGVGEAPSKVMNEYYCTKSGAEEILMQKSITGPNSSYGRDWMMMMDMGPRPSYPSSSSSPISCCNMMMSSPKIPLKTLELFPISSINSKQDSTKL</sequence>
<feature type="chain" id="PRO_0000049367" description="WUSCHEL-related homeobox 3">
    <location>
        <begin position="1"/>
        <end position="244"/>
    </location>
</feature>
<feature type="DNA-binding region" description="Homeobox; WUS-type" evidence="1">
    <location>
        <begin position="4"/>
        <end position="68"/>
    </location>
</feature>
<comment type="function">
    <text evidence="2 4">Probable transcription factor required to initiate organ founder cells in a lateral domain of shoot meristems. Involved in the lateral sepal axis-dependent development of flowers, probably by regulating the proliferation of L1 cells at the lateral region of flower primordia. Required for the formation of the margin cells of the first and second whorl organs.</text>
</comment>
<comment type="interaction">
    <interactant intactId="EBI-15199115">
        <id>Q9SIB4</id>
    </interactant>
    <interactant intactId="EBI-15192325">
        <id>Q8LPR5</id>
        <label>TCP4</label>
    </interactant>
    <organismsDiffer>false</organismsDiffer>
    <experiments>3</experiments>
</comment>
<comment type="subcellular location">
    <subcellularLocation>
        <location evidence="5">Nucleus</location>
    </subcellularLocation>
</comment>
<comment type="tissue specificity">
    <text evidence="2">Expressed in aerial parts of seedlings, inflorescences and flowers at low level. Expressed in a restricted number of L1 cells at the lateral regions of flower primordia.</text>
</comment>
<comment type="developmental stage">
    <text evidence="2 3">First expressed in the L1 cells of the lateral regions of a flower primordium at early stage 1, in which the lateral sepals are expected to develop at a later stage. It then rapidly decreases at the late stage 1 and disappears at stage 2. At stage 3, it reappears in all four-sepal young primordia. Not detected at the central zone of the inflorescence meristem and the floral meristem. In stages 4 through 6, when four sepals develop to enclose the flower bud, it is localized at the lateral edges of the four sepals and forms an arch of the L1 cells at the margin of sepals. Expressed in the young primordia of petals and stamens. As the petals and stamens develop, it is limited at the margins of petals and stamens in a way similar to that of sepals. In the vegetative phase, it is expressed at the lateral regions of young leaf primordia, as well as in flowers and floral organs.</text>
</comment>
<comment type="similarity">
    <text evidence="5">Belongs to the WUS homeobox family.</text>
</comment>
<dbReference type="EMBL" id="AB058920">
    <property type="protein sequence ID" value="BAB79446.1"/>
    <property type="molecule type" value="mRNA"/>
</dbReference>
<dbReference type="EMBL" id="AY251397">
    <property type="protein sequence ID" value="AAP37135.1"/>
    <property type="molecule type" value="mRNA"/>
</dbReference>
<dbReference type="EMBL" id="AC007171">
    <property type="protein sequence ID" value="AAD24374.1"/>
    <property type="molecule type" value="Genomic_DNA"/>
</dbReference>
<dbReference type="EMBL" id="CP002685">
    <property type="protein sequence ID" value="AEC08149.1"/>
    <property type="molecule type" value="Genomic_DNA"/>
</dbReference>
<dbReference type="PIR" id="A84687">
    <property type="entry name" value="A84687"/>
</dbReference>
<dbReference type="RefSeq" id="NP_180429.1">
    <property type="nucleotide sequence ID" value="NM_128422.3"/>
</dbReference>
<dbReference type="SMR" id="Q9SIB4"/>
<dbReference type="BioGRID" id="2760">
    <property type="interactions" value="9"/>
</dbReference>
<dbReference type="FunCoup" id="Q9SIB4">
    <property type="interactions" value="114"/>
</dbReference>
<dbReference type="IntAct" id="Q9SIB4">
    <property type="interactions" value="9"/>
</dbReference>
<dbReference type="STRING" id="3702.Q9SIB4"/>
<dbReference type="PaxDb" id="3702-AT2G28610.1"/>
<dbReference type="EnsemblPlants" id="AT2G28610.1">
    <property type="protein sequence ID" value="AT2G28610.1"/>
    <property type="gene ID" value="AT2G28610"/>
</dbReference>
<dbReference type="GeneID" id="817410"/>
<dbReference type="Gramene" id="AT2G28610.1">
    <property type="protein sequence ID" value="AT2G28610.1"/>
    <property type="gene ID" value="AT2G28610"/>
</dbReference>
<dbReference type="KEGG" id="ath:AT2G28610"/>
<dbReference type="Araport" id="AT2G28610"/>
<dbReference type="TAIR" id="AT2G28610">
    <property type="gene designation" value="PRS"/>
</dbReference>
<dbReference type="eggNOG" id="ENOG502S13K">
    <property type="taxonomic scope" value="Eukaryota"/>
</dbReference>
<dbReference type="HOGENOM" id="CLU_070454_1_0_1"/>
<dbReference type="InParanoid" id="Q9SIB4"/>
<dbReference type="OMA" id="MNEYYCT"/>
<dbReference type="OrthoDB" id="1932526at2759"/>
<dbReference type="PRO" id="PR:Q9SIB4"/>
<dbReference type="Proteomes" id="UP000006548">
    <property type="component" value="Chromosome 2"/>
</dbReference>
<dbReference type="ExpressionAtlas" id="Q9SIB4">
    <property type="expression patterns" value="baseline and differential"/>
</dbReference>
<dbReference type="GO" id="GO:0005634">
    <property type="term" value="C:nucleus"/>
    <property type="evidence" value="ECO:0000314"/>
    <property type="project" value="TAIR"/>
</dbReference>
<dbReference type="GO" id="GO:0003677">
    <property type="term" value="F:DNA binding"/>
    <property type="evidence" value="ECO:0007669"/>
    <property type="project" value="UniProtKB-KW"/>
</dbReference>
<dbReference type="GO" id="GO:0003700">
    <property type="term" value="F:DNA-binding transcription factor activity"/>
    <property type="evidence" value="ECO:0000250"/>
    <property type="project" value="TAIR"/>
</dbReference>
<dbReference type="GO" id="GO:0009943">
    <property type="term" value="P:adaxial/abaxial axis specification"/>
    <property type="evidence" value="ECO:0000315"/>
    <property type="project" value="TAIR"/>
</dbReference>
<dbReference type="GO" id="GO:0030154">
    <property type="term" value="P:cell differentiation"/>
    <property type="evidence" value="ECO:0007669"/>
    <property type="project" value="UniProtKB-KW"/>
</dbReference>
<dbReference type="GO" id="GO:0009947">
    <property type="term" value="P:centrolateral axis specification"/>
    <property type="evidence" value="ECO:0000315"/>
    <property type="project" value="TAIR"/>
</dbReference>
<dbReference type="GO" id="GO:0009908">
    <property type="term" value="P:flower development"/>
    <property type="evidence" value="ECO:0000315"/>
    <property type="project" value="TAIR"/>
</dbReference>
<dbReference type="GO" id="GO:0099402">
    <property type="term" value="P:plant organ development"/>
    <property type="evidence" value="ECO:0000316"/>
    <property type="project" value="TAIR"/>
</dbReference>
<dbReference type="GO" id="GO:0010482">
    <property type="term" value="P:regulation of epidermal cell division"/>
    <property type="evidence" value="ECO:0000315"/>
    <property type="project" value="TAIR"/>
</dbReference>
<dbReference type="GO" id="GO:0010865">
    <property type="term" value="P:stipule development"/>
    <property type="evidence" value="ECO:0000315"/>
    <property type="project" value="TAIR"/>
</dbReference>
<dbReference type="CDD" id="cd00086">
    <property type="entry name" value="homeodomain"/>
    <property type="match status" value="1"/>
</dbReference>
<dbReference type="FunFam" id="1.10.10.60:FF:000146">
    <property type="entry name" value="WUSCHEL-related homeobox 4"/>
    <property type="match status" value="1"/>
</dbReference>
<dbReference type="Gene3D" id="1.10.10.60">
    <property type="entry name" value="Homeodomain-like"/>
    <property type="match status" value="1"/>
</dbReference>
<dbReference type="InterPro" id="IPR001356">
    <property type="entry name" value="HD"/>
</dbReference>
<dbReference type="InterPro" id="IPR009057">
    <property type="entry name" value="Homeodomain-like_sf"/>
</dbReference>
<dbReference type="InterPro" id="IPR044555">
    <property type="entry name" value="WUSCHEL-like"/>
</dbReference>
<dbReference type="PANTHER" id="PTHR45940">
    <property type="entry name" value="WUSCHEL-RELATED HOMEOBOX 1-RELATED"/>
    <property type="match status" value="1"/>
</dbReference>
<dbReference type="PANTHER" id="PTHR45940:SF42">
    <property type="entry name" value="WUSCHEL-RELATED HOMEOBOX 3"/>
    <property type="match status" value="1"/>
</dbReference>
<dbReference type="Pfam" id="PF00046">
    <property type="entry name" value="Homeodomain"/>
    <property type="match status" value="1"/>
</dbReference>
<dbReference type="SMART" id="SM00389">
    <property type="entry name" value="HOX"/>
    <property type="match status" value="1"/>
</dbReference>
<dbReference type="SUPFAM" id="SSF46689">
    <property type="entry name" value="Homeodomain-like"/>
    <property type="match status" value="1"/>
</dbReference>
<dbReference type="PROSITE" id="PS50071">
    <property type="entry name" value="HOMEOBOX_2"/>
    <property type="match status" value="1"/>
</dbReference>
<organism>
    <name type="scientific">Arabidopsis thaliana</name>
    <name type="common">Mouse-ear cress</name>
    <dbReference type="NCBI Taxonomy" id="3702"/>
    <lineage>
        <taxon>Eukaryota</taxon>
        <taxon>Viridiplantae</taxon>
        <taxon>Streptophyta</taxon>
        <taxon>Embryophyta</taxon>
        <taxon>Tracheophyta</taxon>
        <taxon>Spermatophyta</taxon>
        <taxon>Magnoliopsida</taxon>
        <taxon>eudicotyledons</taxon>
        <taxon>Gunneridae</taxon>
        <taxon>Pentapetalae</taxon>
        <taxon>rosids</taxon>
        <taxon>malvids</taxon>
        <taxon>Brassicales</taxon>
        <taxon>Brassicaceae</taxon>
        <taxon>Camelineae</taxon>
        <taxon>Arabidopsis</taxon>
    </lineage>
</organism>
<protein>
    <recommendedName>
        <fullName>WUSCHEL-related homeobox 3</fullName>
    </recommendedName>
    <alternativeName>
        <fullName>Protein PRESSED FLOWER</fullName>
    </alternativeName>
</protein>